<gene>
    <name evidence="1" type="primary">dcd</name>
    <name type="ordered locus">EcE24377A_2358</name>
</gene>
<protein>
    <recommendedName>
        <fullName evidence="1">dCTP deaminase</fullName>
        <ecNumber evidence="1">3.5.4.13</ecNumber>
    </recommendedName>
    <alternativeName>
        <fullName evidence="1">Deoxycytidine triphosphate deaminase</fullName>
    </alternativeName>
</protein>
<keyword id="KW-0378">Hydrolase</keyword>
<keyword id="KW-0546">Nucleotide metabolism</keyword>
<keyword id="KW-0547">Nucleotide-binding</keyword>
<keyword id="KW-1185">Reference proteome</keyword>
<organism>
    <name type="scientific">Escherichia coli O139:H28 (strain E24377A / ETEC)</name>
    <dbReference type="NCBI Taxonomy" id="331111"/>
    <lineage>
        <taxon>Bacteria</taxon>
        <taxon>Pseudomonadati</taxon>
        <taxon>Pseudomonadota</taxon>
        <taxon>Gammaproteobacteria</taxon>
        <taxon>Enterobacterales</taxon>
        <taxon>Enterobacteriaceae</taxon>
        <taxon>Escherichia</taxon>
    </lineage>
</organism>
<accession>A7ZNN9</accession>
<evidence type="ECO:0000255" key="1">
    <source>
        <dbReference type="HAMAP-Rule" id="MF_00146"/>
    </source>
</evidence>
<evidence type="ECO:0000256" key="2">
    <source>
        <dbReference type="SAM" id="MobiDB-lite"/>
    </source>
</evidence>
<proteinExistence type="inferred from homology"/>
<reference key="1">
    <citation type="journal article" date="2008" name="J. Bacteriol.">
        <title>The pangenome structure of Escherichia coli: comparative genomic analysis of E. coli commensal and pathogenic isolates.</title>
        <authorList>
            <person name="Rasko D.A."/>
            <person name="Rosovitz M.J."/>
            <person name="Myers G.S.A."/>
            <person name="Mongodin E.F."/>
            <person name="Fricke W.F."/>
            <person name="Gajer P."/>
            <person name="Crabtree J."/>
            <person name="Sebaihia M."/>
            <person name="Thomson N.R."/>
            <person name="Chaudhuri R."/>
            <person name="Henderson I.R."/>
            <person name="Sperandio V."/>
            <person name="Ravel J."/>
        </authorList>
    </citation>
    <scope>NUCLEOTIDE SEQUENCE [LARGE SCALE GENOMIC DNA]</scope>
    <source>
        <strain>E24377A / ETEC</strain>
    </source>
</reference>
<feature type="chain" id="PRO_1000058101" description="dCTP deaminase">
    <location>
        <begin position="1"/>
        <end position="193"/>
    </location>
</feature>
<feature type="region of interest" description="Disordered" evidence="2">
    <location>
        <begin position="169"/>
        <end position="193"/>
    </location>
</feature>
<feature type="active site" description="Proton donor/acceptor" evidence="1">
    <location>
        <position position="138"/>
    </location>
</feature>
<feature type="binding site" evidence="1">
    <location>
        <begin position="110"/>
        <end position="115"/>
    </location>
    <ligand>
        <name>dCTP</name>
        <dbReference type="ChEBI" id="CHEBI:61481"/>
    </ligand>
</feature>
<feature type="binding site" evidence="1">
    <location>
        <position position="128"/>
    </location>
    <ligand>
        <name>dCTP</name>
        <dbReference type="ChEBI" id="CHEBI:61481"/>
    </ligand>
</feature>
<feature type="binding site" evidence="1">
    <location>
        <begin position="136"/>
        <end position="138"/>
    </location>
    <ligand>
        <name>dCTP</name>
        <dbReference type="ChEBI" id="CHEBI:61481"/>
    </ligand>
</feature>
<feature type="binding site" evidence="1">
    <location>
        <position position="171"/>
    </location>
    <ligand>
        <name>dCTP</name>
        <dbReference type="ChEBI" id="CHEBI:61481"/>
    </ligand>
</feature>
<feature type="binding site" evidence="1">
    <location>
        <position position="178"/>
    </location>
    <ligand>
        <name>dCTP</name>
        <dbReference type="ChEBI" id="CHEBI:61481"/>
    </ligand>
</feature>
<feature type="binding site" evidence="1">
    <location>
        <position position="182"/>
    </location>
    <ligand>
        <name>dCTP</name>
        <dbReference type="ChEBI" id="CHEBI:61481"/>
    </ligand>
</feature>
<name>DCD_ECO24</name>
<dbReference type="EC" id="3.5.4.13" evidence="1"/>
<dbReference type="EMBL" id="CP000800">
    <property type="protein sequence ID" value="ABV18835.1"/>
    <property type="molecule type" value="Genomic_DNA"/>
</dbReference>
<dbReference type="RefSeq" id="WP_001234767.1">
    <property type="nucleotide sequence ID" value="NC_009801.1"/>
</dbReference>
<dbReference type="SMR" id="A7ZNN9"/>
<dbReference type="GeneID" id="93775126"/>
<dbReference type="KEGG" id="ecw:EcE24377A_2358"/>
<dbReference type="HOGENOM" id="CLU_087476_2_0_6"/>
<dbReference type="UniPathway" id="UPA00610">
    <property type="reaction ID" value="UER00665"/>
</dbReference>
<dbReference type="Proteomes" id="UP000001122">
    <property type="component" value="Chromosome"/>
</dbReference>
<dbReference type="GO" id="GO:0008829">
    <property type="term" value="F:dCTP deaminase activity"/>
    <property type="evidence" value="ECO:0007669"/>
    <property type="project" value="UniProtKB-UniRule"/>
</dbReference>
<dbReference type="GO" id="GO:0000166">
    <property type="term" value="F:nucleotide binding"/>
    <property type="evidence" value="ECO:0007669"/>
    <property type="project" value="UniProtKB-KW"/>
</dbReference>
<dbReference type="GO" id="GO:0006226">
    <property type="term" value="P:dUMP biosynthetic process"/>
    <property type="evidence" value="ECO:0007669"/>
    <property type="project" value="UniProtKB-UniPathway"/>
</dbReference>
<dbReference type="GO" id="GO:0006229">
    <property type="term" value="P:dUTP biosynthetic process"/>
    <property type="evidence" value="ECO:0007669"/>
    <property type="project" value="UniProtKB-UniRule"/>
</dbReference>
<dbReference type="GO" id="GO:0015949">
    <property type="term" value="P:nucleobase-containing small molecule interconversion"/>
    <property type="evidence" value="ECO:0007669"/>
    <property type="project" value="TreeGrafter"/>
</dbReference>
<dbReference type="CDD" id="cd07557">
    <property type="entry name" value="trimeric_dUTPase"/>
    <property type="match status" value="1"/>
</dbReference>
<dbReference type="FunFam" id="2.70.40.10:FF:000003">
    <property type="entry name" value="dCTP deaminase"/>
    <property type="match status" value="1"/>
</dbReference>
<dbReference type="Gene3D" id="2.70.40.10">
    <property type="match status" value="1"/>
</dbReference>
<dbReference type="HAMAP" id="MF_00146">
    <property type="entry name" value="dCTP_deaminase"/>
    <property type="match status" value="1"/>
</dbReference>
<dbReference type="InterPro" id="IPR011962">
    <property type="entry name" value="dCTP_deaminase"/>
</dbReference>
<dbReference type="InterPro" id="IPR036157">
    <property type="entry name" value="dUTPase-like_sf"/>
</dbReference>
<dbReference type="InterPro" id="IPR033704">
    <property type="entry name" value="dUTPase_trimeric"/>
</dbReference>
<dbReference type="NCBIfam" id="TIGR02274">
    <property type="entry name" value="dCTP_deam"/>
    <property type="match status" value="1"/>
</dbReference>
<dbReference type="PANTHER" id="PTHR42680">
    <property type="entry name" value="DCTP DEAMINASE"/>
    <property type="match status" value="1"/>
</dbReference>
<dbReference type="PANTHER" id="PTHR42680:SF3">
    <property type="entry name" value="DCTP DEAMINASE"/>
    <property type="match status" value="1"/>
</dbReference>
<dbReference type="Pfam" id="PF22769">
    <property type="entry name" value="DCD"/>
    <property type="match status" value="1"/>
</dbReference>
<dbReference type="SUPFAM" id="SSF51283">
    <property type="entry name" value="dUTPase-like"/>
    <property type="match status" value="1"/>
</dbReference>
<comment type="function">
    <text evidence="1">Catalyzes the deamination of dCTP to dUTP.</text>
</comment>
<comment type="catalytic activity">
    <reaction evidence="1">
        <text>dCTP + H2O + H(+) = dUTP + NH4(+)</text>
        <dbReference type="Rhea" id="RHEA:22680"/>
        <dbReference type="ChEBI" id="CHEBI:15377"/>
        <dbReference type="ChEBI" id="CHEBI:15378"/>
        <dbReference type="ChEBI" id="CHEBI:28938"/>
        <dbReference type="ChEBI" id="CHEBI:61481"/>
        <dbReference type="ChEBI" id="CHEBI:61555"/>
        <dbReference type="EC" id="3.5.4.13"/>
    </reaction>
</comment>
<comment type="pathway">
    <text evidence="1">Pyrimidine metabolism; dUMP biosynthesis; dUMP from dCTP (dUTP route): step 1/2.</text>
</comment>
<comment type="subunit">
    <text evidence="1">Homotrimer.</text>
</comment>
<comment type="similarity">
    <text evidence="1">Belongs to the dCTP deaminase family.</text>
</comment>
<sequence length="193" mass="21221">MRLCDRDIEAWLDEGRLSINPRPPVERINGATVDVRLGNKFRTFRGHTAAFIDLSGPKDEVSAALDRVMSDEIVLDEGEAFYLHPGELALAVTLESVTLPADLVGWLDGRSSLARLGLMVHVTAHRIDPGWSGCIVLEFYNSGKLPLALRPGMLIGALSFEPLSGPAARPYNRREDAKYRNQQGAVASRIDKD</sequence>